<dbReference type="EC" id="2.1.1.74" evidence="1"/>
<dbReference type="EMBL" id="CP000473">
    <property type="protein sequence ID" value="ABJ81358.1"/>
    <property type="molecule type" value="Genomic_DNA"/>
</dbReference>
<dbReference type="SMR" id="Q02C58"/>
<dbReference type="STRING" id="234267.Acid_0346"/>
<dbReference type="KEGG" id="sus:Acid_0346"/>
<dbReference type="eggNOG" id="COG1206">
    <property type="taxonomic scope" value="Bacteria"/>
</dbReference>
<dbReference type="HOGENOM" id="CLU_033057_1_0_0"/>
<dbReference type="InParanoid" id="Q02C58"/>
<dbReference type="OrthoDB" id="9803114at2"/>
<dbReference type="GO" id="GO:0005829">
    <property type="term" value="C:cytosol"/>
    <property type="evidence" value="ECO:0007669"/>
    <property type="project" value="TreeGrafter"/>
</dbReference>
<dbReference type="GO" id="GO:0050660">
    <property type="term" value="F:flavin adenine dinucleotide binding"/>
    <property type="evidence" value="ECO:0007669"/>
    <property type="project" value="UniProtKB-UniRule"/>
</dbReference>
<dbReference type="GO" id="GO:0047151">
    <property type="term" value="F:tRNA (uracil(54)-C5)-methyltransferase activity, 5,10-methylenetetrahydrofolate-dependent"/>
    <property type="evidence" value="ECO:0007669"/>
    <property type="project" value="UniProtKB-UniRule"/>
</dbReference>
<dbReference type="GO" id="GO:0030488">
    <property type="term" value="P:tRNA methylation"/>
    <property type="evidence" value="ECO:0007669"/>
    <property type="project" value="TreeGrafter"/>
</dbReference>
<dbReference type="GO" id="GO:0002098">
    <property type="term" value="P:tRNA wobble uridine modification"/>
    <property type="evidence" value="ECO:0007669"/>
    <property type="project" value="TreeGrafter"/>
</dbReference>
<dbReference type="Gene3D" id="3.50.50.60">
    <property type="entry name" value="FAD/NAD(P)-binding domain"/>
    <property type="match status" value="2"/>
</dbReference>
<dbReference type="HAMAP" id="MF_01037">
    <property type="entry name" value="TrmFO"/>
    <property type="match status" value="1"/>
</dbReference>
<dbReference type="InterPro" id="IPR036188">
    <property type="entry name" value="FAD/NAD-bd_sf"/>
</dbReference>
<dbReference type="InterPro" id="IPR002218">
    <property type="entry name" value="MnmG-rel"/>
</dbReference>
<dbReference type="InterPro" id="IPR040131">
    <property type="entry name" value="MnmG_N"/>
</dbReference>
<dbReference type="InterPro" id="IPR004417">
    <property type="entry name" value="TrmFO"/>
</dbReference>
<dbReference type="NCBIfam" id="TIGR00137">
    <property type="entry name" value="gid_trmFO"/>
    <property type="match status" value="1"/>
</dbReference>
<dbReference type="NCBIfam" id="NF003739">
    <property type="entry name" value="PRK05335.1"/>
    <property type="match status" value="1"/>
</dbReference>
<dbReference type="PANTHER" id="PTHR11806">
    <property type="entry name" value="GLUCOSE INHIBITED DIVISION PROTEIN A"/>
    <property type="match status" value="1"/>
</dbReference>
<dbReference type="PANTHER" id="PTHR11806:SF2">
    <property type="entry name" value="METHYLENETETRAHYDROFOLATE--TRNA-(URACIL-5-)-METHYLTRANSFERASE TRMFO"/>
    <property type="match status" value="1"/>
</dbReference>
<dbReference type="Pfam" id="PF01134">
    <property type="entry name" value="GIDA"/>
    <property type="match status" value="1"/>
</dbReference>
<dbReference type="SUPFAM" id="SSF51905">
    <property type="entry name" value="FAD/NAD(P)-binding domain"/>
    <property type="match status" value="1"/>
</dbReference>
<gene>
    <name evidence="1" type="primary">trmFO</name>
    <name type="ordered locus">Acid_0346</name>
</gene>
<accession>Q02C58</accession>
<protein>
    <recommendedName>
        <fullName evidence="1">Methylenetetrahydrofolate--tRNA-(uracil-5-)-methyltransferase TrmFO</fullName>
        <ecNumber evidence="1">2.1.1.74</ecNumber>
    </recommendedName>
    <alternativeName>
        <fullName evidence="1">Folate-dependent tRNA (uracil-5-)-methyltransferase</fullName>
    </alternativeName>
    <alternativeName>
        <fullName evidence="1">Folate-dependent tRNA(M-5-U54)-methyltransferase</fullName>
    </alternativeName>
</protein>
<comment type="function">
    <text evidence="1">Catalyzes the folate-dependent formation of 5-methyl-uridine at position 54 (M-5-U54) in all tRNAs.</text>
</comment>
<comment type="catalytic activity">
    <reaction evidence="1">
        <text>uridine(54) in tRNA + (6R)-5,10-methylene-5,6,7,8-tetrahydrofolate + NADH + H(+) = 5-methyluridine(54) in tRNA + (6S)-5,6,7,8-tetrahydrofolate + NAD(+)</text>
        <dbReference type="Rhea" id="RHEA:16873"/>
        <dbReference type="Rhea" id="RHEA-COMP:10167"/>
        <dbReference type="Rhea" id="RHEA-COMP:10193"/>
        <dbReference type="ChEBI" id="CHEBI:15378"/>
        <dbReference type="ChEBI" id="CHEBI:15636"/>
        <dbReference type="ChEBI" id="CHEBI:57453"/>
        <dbReference type="ChEBI" id="CHEBI:57540"/>
        <dbReference type="ChEBI" id="CHEBI:57945"/>
        <dbReference type="ChEBI" id="CHEBI:65315"/>
        <dbReference type="ChEBI" id="CHEBI:74447"/>
        <dbReference type="EC" id="2.1.1.74"/>
    </reaction>
</comment>
<comment type="catalytic activity">
    <reaction evidence="1">
        <text>uridine(54) in tRNA + (6R)-5,10-methylene-5,6,7,8-tetrahydrofolate + NADPH + H(+) = 5-methyluridine(54) in tRNA + (6S)-5,6,7,8-tetrahydrofolate + NADP(+)</text>
        <dbReference type="Rhea" id="RHEA:62372"/>
        <dbReference type="Rhea" id="RHEA-COMP:10167"/>
        <dbReference type="Rhea" id="RHEA-COMP:10193"/>
        <dbReference type="ChEBI" id="CHEBI:15378"/>
        <dbReference type="ChEBI" id="CHEBI:15636"/>
        <dbReference type="ChEBI" id="CHEBI:57453"/>
        <dbReference type="ChEBI" id="CHEBI:57783"/>
        <dbReference type="ChEBI" id="CHEBI:58349"/>
        <dbReference type="ChEBI" id="CHEBI:65315"/>
        <dbReference type="ChEBI" id="CHEBI:74447"/>
        <dbReference type="EC" id="2.1.1.74"/>
    </reaction>
</comment>
<comment type="cofactor">
    <cofactor evidence="1">
        <name>FAD</name>
        <dbReference type="ChEBI" id="CHEBI:57692"/>
    </cofactor>
</comment>
<comment type="subcellular location">
    <subcellularLocation>
        <location evidence="1">Cytoplasm</location>
    </subcellularLocation>
</comment>
<comment type="similarity">
    <text evidence="1">Belongs to the MnmG family. TrmFO subfamily.</text>
</comment>
<evidence type="ECO:0000255" key="1">
    <source>
        <dbReference type="HAMAP-Rule" id="MF_01037"/>
    </source>
</evidence>
<organism>
    <name type="scientific">Solibacter usitatus (strain Ellin6076)</name>
    <dbReference type="NCBI Taxonomy" id="234267"/>
    <lineage>
        <taxon>Bacteria</taxon>
        <taxon>Pseudomonadati</taxon>
        <taxon>Acidobacteriota</taxon>
        <taxon>Terriglobia</taxon>
        <taxon>Bryobacterales</taxon>
        <taxon>Solibacteraceae</taxon>
        <taxon>Candidatus Solibacter</taxon>
    </lineage>
</organism>
<sequence length="445" mass="49362">MSKPIHIIGGGLAGTEAAWQLARRGLACTLHEMRPVRPTPAHQTDRLAELVCSNSLKSESESTAPWLLKEELRRLDSLLLQCAQKARVPGGHALTVDRDIFAREVTAAITAEPLITLLRDEVSSLSADAIWIVASGPLTSGPLAEEIARLTGSGRLYFYDSISPIVDAESVDTSIAWWASRYGKSTDGTDDYLNCPLDRGQYEHFVDELLKADSVSAHIPEDNTCYFEACLPIEEIARRGRDTLRFGPMKPMGLDDPRTGRRPWAVVQLRQENLRAESFNLVGFQNHMKFPEQKRVLRLIPGLQNAEFLRYGQIHRNTYINAPALLTAALNLRARPEIFFAGQISGVEGYVESIATGLMAGIHAAALATGDTPRPLPRQTALGSLCHYVSGADPKDYQPANITFDLLPQLEEAERQRLRRDKKARHALVCQRALEALEEYRHAIV</sequence>
<feature type="chain" id="PRO_0000346394" description="Methylenetetrahydrofolate--tRNA-(uracil-5-)-methyltransferase TrmFO">
    <location>
        <begin position="1"/>
        <end position="445"/>
    </location>
</feature>
<feature type="binding site" evidence="1">
    <location>
        <begin position="9"/>
        <end position="14"/>
    </location>
    <ligand>
        <name>FAD</name>
        <dbReference type="ChEBI" id="CHEBI:57692"/>
    </ligand>
</feature>
<reference key="1">
    <citation type="journal article" date="2009" name="Appl. Environ. Microbiol.">
        <title>Three genomes from the phylum Acidobacteria provide insight into the lifestyles of these microorganisms in soils.</title>
        <authorList>
            <person name="Ward N.L."/>
            <person name="Challacombe J.F."/>
            <person name="Janssen P.H."/>
            <person name="Henrissat B."/>
            <person name="Coutinho P.M."/>
            <person name="Wu M."/>
            <person name="Xie G."/>
            <person name="Haft D.H."/>
            <person name="Sait M."/>
            <person name="Badger J."/>
            <person name="Barabote R.D."/>
            <person name="Bradley B."/>
            <person name="Brettin T.S."/>
            <person name="Brinkac L.M."/>
            <person name="Bruce D."/>
            <person name="Creasy T."/>
            <person name="Daugherty S.C."/>
            <person name="Davidsen T.M."/>
            <person name="DeBoy R.T."/>
            <person name="Detter J.C."/>
            <person name="Dodson R.J."/>
            <person name="Durkin A.S."/>
            <person name="Ganapathy A."/>
            <person name="Gwinn-Giglio M."/>
            <person name="Han C.S."/>
            <person name="Khouri H."/>
            <person name="Kiss H."/>
            <person name="Kothari S.P."/>
            <person name="Madupu R."/>
            <person name="Nelson K.E."/>
            <person name="Nelson W.C."/>
            <person name="Paulsen I."/>
            <person name="Penn K."/>
            <person name="Ren Q."/>
            <person name="Rosovitz M.J."/>
            <person name="Selengut J.D."/>
            <person name="Shrivastava S."/>
            <person name="Sullivan S.A."/>
            <person name="Tapia R."/>
            <person name="Thompson L.S."/>
            <person name="Watkins K.L."/>
            <person name="Yang Q."/>
            <person name="Yu C."/>
            <person name="Zafar N."/>
            <person name="Zhou L."/>
            <person name="Kuske C.R."/>
        </authorList>
    </citation>
    <scope>NUCLEOTIDE SEQUENCE [LARGE SCALE GENOMIC DNA]</scope>
    <source>
        <strain>Ellin6076</strain>
    </source>
</reference>
<keyword id="KW-0963">Cytoplasm</keyword>
<keyword id="KW-0274">FAD</keyword>
<keyword id="KW-0285">Flavoprotein</keyword>
<keyword id="KW-0489">Methyltransferase</keyword>
<keyword id="KW-0520">NAD</keyword>
<keyword id="KW-0521">NADP</keyword>
<keyword id="KW-0808">Transferase</keyword>
<keyword id="KW-0819">tRNA processing</keyword>
<name>TRMFO_SOLUE</name>
<proteinExistence type="inferred from homology"/>